<evidence type="ECO:0000250" key="1">
    <source>
        <dbReference type="UniProtKB" id="O75691"/>
    </source>
</evidence>
<evidence type="ECO:0000255" key="2"/>
<evidence type="ECO:0000256" key="3">
    <source>
        <dbReference type="SAM" id="MobiDB-lite"/>
    </source>
</evidence>
<evidence type="ECO:0000305" key="4"/>
<keyword id="KW-0175">Coiled coil</keyword>
<keyword id="KW-0539">Nucleus</keyword>
<keyword id="KW-0597">Phosphoprotein</keyword>
<keyword id="KW-1185">Reference proteome</keyword>
<keyword id="KW-0677">Repeat</keyword>
<keyword id="KW-0698">rRNA processing</keyword>
<feature type="chain" id="PRO_0000080012" description="Small subunit processome component 20 homolog">
    <location>
        <begin position="1"/>
        <end position="2788"/>
    </location>
</feature>
<feature type="repeat" description="HEAT 1">
    <location>
        <begin position="165"/>
        <end position="202"/>
    </location>
</feature>
<feature type="repeat" description="HEAT 2">
    <location>
        <begin position="1841"/>
        <end position="1878"/>
    </location>
</feature>
<feature type="region of interest" description="Disordered" evidence="3">
    <location>
        <begin position="771"/>
        <end position="795"/>
    </location>
</feature>
<feature type="region of interest" description="Disordered" evidence="3">
    <location>
        <begin position="866"/>
        <end position="908"/>
    </location>
</feature>
<feature type="region of interest" description="Disordered" evidence="3">
    <location>
        <begin position="1718"/>
        <end position="1752"/>
    </location>
</feature>
<feature type="region of interest" description="Disordered" evidence="3">
    <location>
        <begin position="2598"/>
        <end position="2617"/>
    </location>
</feature>
<feature type="coiled-coil region" evidence="2">
    <location>
        <begin position="2691"/>
        <end position="2768"/>
    </location>
</feature>
<feature type="compositionally biased region" description="Basic and acidic residues" evidence="3">
    <location>
        <begin position="771"/>
        <end position="782"/>
    </location>
</feature>
<feature type="compositionally biased region" description="Acidic residues" evidence="3">
    <location>
        <begin position="876"/>
        <end position="898"/>
    </location>
</feature>
<feature type="compositionally biased region" description="Basic and acidic residues" evidence="3">
    <location>
        <begin position="1722"/>
        <end position="1737"/>
    </location>
</feature>
<feature type="compositionally biased region" description="Basic and acidic residues" evidence="3">
    <location>
        <begin position="2607"/>
        <end position="2617"/>
    </location>
</feature>
<feature type="modified residue" description="Phosphoserine" evidence="1">
    <location>
        <position position="788"/>
    </location>
</feature>
<feature type="modified residue" description="Phosphoserine" evidence="1">
    <location>
        <position position="2640"/>
    </location>
</feature>
<feature type="sequence conflict" description="In Ref. 3; BAC53793." evidence="4" ref="3">
    <original>Y</original>
    <variation>C</variation>
    <location>
        <position position="1883"/>
    </location>
</feature>
<feature type="sequence conflict" description="In Ref. 3; BAC53793." evidence="4" ref="3">
    <original>V</original>
    <variation>R</variation>
    <location>
        <position position="2190"/>
    </location>
</feature>
<feature type="sequence conflict" description="In Ref. 2; AAH05522." evidence="4" ref="2">
    <original>V</original>
    <variation>L</variation>
    <location>
        <position position="2397"/>
    </location>
</feature>
<feature type="sequence conflict" description="In Ref. 4; BAC32954." evidence="4" ref="4">
    <original>L</original>
    <variation>V</variation>
    <location>
        <position position="2472"/>
    </location>
</feature>
<sequence length="2788" mass="317744">MKPKPLSHKTENTYRFLTFAERLGNVNIDIIHRIDRTASYDEDVETYFFEALLKWRELNLTEHFGKFYKEVIDKCQSFNQLVYHQNEIVQSLKTHLQIRNSLAYQPLLDLVVQLARDLQTDFYPHFEDFFLTITSILETQDTELLEWAFTSLSYLYKYLWRLMVKDMSKIYSLYSTLLAHKKLHIRNFAAESFTFLMRKVSDKNALFNLMFLDLNEHPEKVEGVGQLLFEMCKGVRNMFHSCTGQALKLLLQKLGPVTETETQLPWILVGETLKTMAKSSVVYIYKEHFGVFFDCLQESLLELHNKVTEANCCENSEQMRRLLETYLIVVKHGSGSKITRPADVCGVLSEALQTASLSTSCRKTLLDVVSALLLAENVSLPETLIKETVEKVFESKFERRSVLDFSEVMFAMKQFEQLFLPSFLLYIENCFLMDNSVVSDEALAILAKLILHKAPPPTAGSMAIEKYPLVFSQQTVGSYLKQRKADSKRRKEQFPVLSHLLSIVQLPPNKDATYLSRSWAALVVLPHLRPLEKEKTISLVSCFIESLFLAVDRGSFGKGHLFVLCQAVNTLLSLEESSELLHLVPVGRVKHLVLTSPTEPSVLLLADLYYQRLALCGCKGPLSEEALMELFPKLQANISTGVSKIRLLTIRILNHFDIRLPVSMEDDGLSERQSAFAILRQAELVPATVSDYREKLLHLRKLRHDVVQGAVPQGRLQEVPLRYLLGMLYVNFSALWDPVIELISSHAYGMENKQFWNVCYEHLEKAASHAEKELHKDVRDEESTGDESWEQTQEGDVGDLYQQQLALKTDCRERLDHTNFRFLLWRALAKFPERVEPRSRELSPLFLRFINNEYYPADLQVAPTQDLRKKGRGAVAEEEEEEEPAAGEDEELEEEAVPTEDAPQKKKTRRAAAKQLIAHLQVFSKFSNPRALYLESKLYELYLQLLLHQDQAVQKITLDCIMTYRHPHILPYRENLQRLLDDRSFKEEIVHFNISEDNTVVKAAHRADLFPILMRILYGRMKNKTGSKTQGKSASGTRMAIVLRFLAGTQPEEIQLFLDLLSEPVKHFKDGDCCSAVIQAVEDLDVSKVLPVGRQHGVLNSLEVVLKNISHLISTYLPKILQILLCMTATVSHILDQREKIQLRFINPLKNLRRLGIKMVTDIFLDWESYQFKAEEIDAVFHGTVWPQICRLGSESQYSPTPLLKLISIWSRNARYFPLLAKQKPGHPEYDILTNVFAVLSAKNLSEATASIIMDIVDDLLNLPDFQPTEAVPSLPVTGCVYADVAEDTEPVTVGGRLVLPHVPAILQYLSKTTISAEKVKKKKNRAQVSKELGILSKISKFMKDREQCSLLITLLLPFLLRGNVAQDTELDILVTVQNLLQHCLHPAHFLRPLAKLFSVIKNKLSRQLLCTVFQMSDFESRLKYITDIVKLNAFDKRHLDDINFDVRFSAFQTITSNIKAMQTVDADYLIAVMHNCFYNMEIGDMSLSDNASICLTSIIKRLAALNVTEKEYKEIIHRTLLEKLRKGLKSQTESVQHDYTLILSCLIQTFPNQLEFKDLVQLTHCHDPEMDFFENMKHIQIHRRARALKKLAKQLLEGQVVLSSKSLQNYIMPYAMAPILDEKMLKHENITIAATEVIGAICRHLSWPAYVYYLKHFIHVLQSGQINQKLAVSLLVIVLEAFHFDYKTLEEQMGNVKNEENTVEMAELLEPEAMEVEDMDEAGKEQASERLSDSKEALGAPEAAASEGTVAKEQECISKSVSFLPRNKEELERTIQTIQGAITGDILPRLHKCLASATKREEEHKLVKSKVVNDEEVVRVPLAFAMVKLMRSLPREVMEANLPSILLKVCVLLKNRAQEIRDIARSTLSKIIEDLGVHFLQYVLKELQTTLVRGYQVHVLTFTVYTLLQGLSSKLQVGDLDSCLHIMTEIFNHELFGALAEEKEVKQILSKVMEARRSKSYDSYEILGKFVGKQQVTKLILPLKEILQNTTSLKLARKVHETLRRIIAGLIVNPDMTADALLLLSYGLVSENLPLLTEKEKKPAAPVPDARLPPQSCLLLPATPVRGGPKAVVNKKTNMHIFIESGLRLLHLSLKTSRIKSSSEHVLEMLDPFVSVLINCLGAQDVKVITGALQCLIWVLRFPLPSIASKAEQLTKHLFLLLKNYARVGAARGQNFHLVVNCFKCVTIVVKKVKSHQITEKQLQVLLAYAEEDIYDTSRQATAFGLLKAILSRKLLVPEIDDIMRKVSKLAISAQNEPARVQCRQVFLKYILDYPLGEKLRPNLEFMLAQLNYEHETGRESTLEMIAYLFETFPQGLLHEHCGMFFIPLCLMMVNDDSAMCKRMASMAIKSLLSKVDREKKDWLFGLVTSWFEAKKRLNRQLAALACGLFVESEGVDFERRLGTLLPVIEKEIDPENFKDIIEETEEKAADRLLFGFLTLMRKLIKECSIIHFTKPSETLSKIWSHVHSHLRHPHSWVWLTAAQIFGLLFASCQPEELIQKWKGKKTKKKTSDPIAVRFLTSDLGQKMKSISLASCHQLHSKFLDESLGEQVVKNLLFIAKVLYLLELESGNKRGEVKDSEEQDTLADALAREAAEEKAGAGGKMESNREKKEEPSKPATLMWLIQKLSRMAKLEAAYSPRNPLKRTCIFKFLGAVAVDLGVDRVKPYLPLIIAPLFRELNSTFAEQDPVLKNLSQEIIELLKKLVGLESFSLAFASVQKQASEKRALRKKRKALEFVTNPDIAAKKKLKKHKNKSEAKKRKIEFLRPGYKAKRQKSHSLRDLAMVE</sequence>
<reference key="1">
    <citation type="journal article" date="2009" name="PLoS Biol.">
        <title>Lineage-specific biology revealed by a finished genome assembly of the mouse.</title>
        <authorList>
            <person name="Church D.M."/>
            <person name="Goodstadt L."/>
            <person name="Hillier L.W."/>
            <person name="Zody M.C."/>
            <person name="Goldstein S."/>
            <person name="She X."/>
            <person name="Bult C.J."/>
            <person name="Agarwala R."/>
            <person name="Cherry J.L."/>
            <person name="DiCuccio M."/>
            <person name="Hlavina W."/>
            <person name="Kapustin Y."/>
            <person name="Meric P."/>
            <person name="Maglott D."/>
            <person name="Birtle Z."/>
            <person name="Marques A.C."/>
            <person name="Graves T."/>
            <person name="Zhou S."/>
            <person name="Teague B."/>
            <person name="Potamousis K."/>
            <person name="Churas C."/>
            <person name="Place M."/>
            <person name="Herschleb J."/>
            <person name="Runnheim R."/>
            <person name="Forrest D."/>
            <person name="Amos-Landgraf J."/>
            <person name="Schwartz D.C."/>
            <person name="Cheng Z."/>
            <person name="Lindblad-Toh K."/>
            <person name="Eichler E.E."/>
            <person name="Ponting C.P."/>
        </authorList>
    </citation>
    <scope>NUCLEOTIDE SEQUENCE [LARGE SCALE GENOMIC DNA]</scope>
    <source>
        <strain>C57BL/6J</strain>
    </source>
</reference>
<reference key="2">
    <citation type="journal article" date="2004" name="Genome Res.">
        <title>The status, quality, and expansion of the NIH full-length cDNA project: the Mammalian Gene Collection (MGC).</title>
        <authorList>
            <consortium name="The MGC Project Team"/>
        </authorList>
    </citation>
    <scope>NUCLEOTIDE SEQUENCE [LARGE SCALE MRNA] OF 1-916 AND 1324-2788</scope>
    <source>
        <strain>C57BL/6J</strain>
        <tissue>Mammary gland</tissue>
        <tissue>Oocyte</tissue>
    </source>
</reference>
<reference key="3">
    <citation type="submission" date="2000-12" db="EMBL/GenBank/DDBJ databases">
        <title>Isolation and characterization of novel human and mouse genes, which are expressed in the digestive tract.</title>
        <authorList>
            <person name="Daigo Y."/>
            <person name="Takayama I."/>
            <person name="Fujino M.A."/>
        </authorList>
    </citation>
    <scope>NUCLEOTIDE SEQUENCE [MRNA] OF 1878-2788</scope>
</reference>
<reference key="4">
    <citation type="journal article" date="2005" name="Science">
        <title>The transcriptional landscape of the mammalian genome.</title>
        <authorList>
            <person name="Carninci P."/>
            <person name="Kasukawa T."/>
            <person name="Katayama S."/>
            <person name="Gough J."/>
            <person name="Frith M.C."/>
            <person name="Maeda N."/>
            <person name="Oyama R."/>
            <person name="Ravasi T."/>
            <person name="Lenhard B."/>
            <person name="Wells C."/>
            <person name="Kodzius R."/>
            <person name="Shimokawa K."/>
            <person name="Bajic V.B."/>
            <person name="Brenner S.E."/>
            <person name="Batalov S."/>
            <person name="Forrest A.R."/>
            <person name="Zavolan M."/>
            <person name="Davis M.J."/>
            <person name="Wilming L.G."/>
            <person name="Aidinis V."/>
            <person name="Allen J.E."/>
            <person name="Ambesi-Impiombato A."/>
            <person name="Apweiler R."/>
            <person name="Aturaliya R.N."/>
            <person name="Bailey T.L."/>
            <person name="Bansal M."/>
            <person name="Baxter L."/>
            <person name="Beisel K.W."/>
            <person name="Bersano T."/>
            <person name="Bono H."/>
            <person name="Chalk A.M."/>
            <person name="Chiu K.P."/>
            <person name="Choudhary V."/>
            <person name="Christoffels A."/>
            <person name="Clutterbuck D.R."/>
            <person name="Crowe M.L."/>
            <person name="Dalla E."/>
            <person name="Dalrymple B.P."/>
            <person name="de Bono B."/>
            <person name="Della Gatta G."/>
            <person name="di Bernardo D."/>
            <person name="Down T."/>
            <person name="Engstrom P."/>
            <person name="Fagiolini M."/>
            <person name="Faulkner G."/>
            <person name="Fletcher C.F."/>
            <person name="Fukushima T."/>
            <person name="Furuno M."/>
            <person name="Futaki S."/>
            <person name="Gariboldi M."/>
            <person name="Georgii-Hemming P."/>
            <person name="Gingeras T.R."/>
            <person name="Gojobori T."/>
            <person name="Green R.E."/>
            <person name="Gustincich S."/>
            <person name="Harbers M."/>
            <person name="Hayashi Y."/>
            <person name="Hensch T.K."/>
            <person name="Hirokawa N."/>
            <person name="Hill D."/>
            <person name="Huminiecki L."/>
            <person name="Iacono M."/>
            <person name="Ikeo K."/>
            <person name="Iwama A."/>
            <person name="Ishikawa T."/>
            <person name="Jakt M."/>
            <person name="Kanapin A."/>
            <person name="Katoh M."/>
            <person name="Kawasawa Y."/>
            <person name="Kelso J."/>
            <person name="Kitamura H."/>
            <person name="Kitano H."/>
            <person name="Kollias G."/>
            <person name="Krishnan S.P."/>
            <person name="Kruger A."/>
            <person name="Kummerfeld S.K."/>
            <person name="Kurochkin I.V."/>
            <person name="Lareau L.F."/>
            <person name="Lazarevic D."/>
            <person name="Lipovich L."/>
            <person name="Liu J."/>
            <person name="Liuni S."/>
            <person name="McWilliam S."/>
            <person name="Madan Babu M."/>
            <person name="Madera M."/>
            <person name="Marchionni L."/>
            <person name="Matsuda H."/>
            <person name="Matsuzawa S."/>
            <person name="Miki H."/>
            <person name="Mignone F."/>
            <person name="Miyake S."/>
            <person name="Morris K."/>
            <person name="Mottagui-Tabar S."/>
            <person name="Mulder N."/>
            <person name="Nakano N."/>
            <person name="Nakauchi H."/>
            <person name="Ng P."/>
            <person name="Nilsson R."/>
            <person name="Nishiguchi S."/>
            <person name="Nishikawa S."/>
            <person name="Nori F."/>
            <person name="Ohara O."/>
            <person name="Okazaki Y."/>
            <person name="Orlando V."/>
            <person name="Pang K.C."/>
            <person name="Pavan W.J."/>
            <person name="Pavesi G."/>
            <person name="Pesole G."/>
            <person name="Petrovsky N."/>
            <person name="Piazza S."/>
            <person name="Reed J."/>
            <person name="Reid J.F."/>
            <person name="Ring B.Z."/>
            <person name="Ringwald M."/>
            <person name="Rost B."/>
            <person name="Ruan Y."/>
            <person name="Salzberg S.L."/>
            <person name="Sandelin A."/>
            <person name="Schneider C."/>
            <person name="Schoenbach C."/>
            <person name="Sekiguchi K."/>
            <person name="Semple C.A."/>
            <person name="Seno S."/>
            <person name="Sessa L."/>
            <person name="Sheng Y."/>
            <person name="Shibata Y."/>
            <person name="Shimada H."/>
            <person name="Shimada K."/>
            <person name="Silva D."/>
            <person name="Sinclair B."/>
            <person name="Sperling S."/>
            <person name="Stupka E."/>
            <person name="Sugiura K."/>
            <person name="Sultana R."/>
            <person name="Takenaka Y."/>
            <person name="Taki K."/>
            <person name="Tammoja K."/>
            <person name="Tan S.L."/>
            <person name="Tang S."/>
            <person name="Taylor M.S."/>
            <person name="Tegner J."/>
            <person name="Teichmann S.A."/>
            <person name="Ueda H.R."/>
            <person name="van Nimwegen E."/>
            <person name="Verardo R."/>
            <person name="Wei C.L."/>
            <person name="Yagi K."/>
            <person name="Yamanishi H."/>
            <person name="Zabarovsky E."/>
            <person name="Zhu S."/>
            <person name="Zimmer A."/>
            <person name="Hide W."/>
            <person name="Bult C."/>
            <person name="Grimmond S.M."/>
            <person name="Teasdale R.D."/>
            <person name="Liu E.T."/>
            <person name="Brusic V."/>
            <person name="Quackenbush J."/>
            <person name="Wahlestedt C."/>
            <person name="Mattick J.S."/>
            <person name="Hume D.A."/>
            <person name="Kai C."/>
            <person name="Sasaki D."/>
            <person name="Tomaru Y."/>
            <person name="Fukuda S."/>
            <person name="Kanamori-Katayama M."/>
            <person name="Suzuki M."/>
            <person name="Aoki J."/>
            <person name="Arakawa T."/>
            <person name="Iida J."/>
            <person name="Imamura K."/>
            <person name="Itoh M."/>
            <person name="Kato T."/>
            <person name="Kawaji H."/>
            <person name="Kawagashira N."/>
            <person name="Kawashima T."/>
            <person name="Kojima M."/>
            <person name="Kondo S."/>
            <person name="Konno H."/>
            <person name="Nakano K."/>
            <person name="Ninomiya N."/>
            <person name="Nishio T."/>
            <person name="Okada M."/>
            <person name="Plessy C."/>
            <person name="Shibata K."/>
            <person name="Shiraki T."/>
            <person name="Suzuki S."/>
            <person name="Tagami M."/>
            <person name="Waki K."/>
            <person name="Watahiki A."/>
            <person name="Okamura-Oho Y."/>
            <person name="Suzuki H."/>
            <person name="Kawai J."/>
            <person name="Hayashizaki Y."/>
        </authorList>
    </citation>
    <scope>NUCLEOTIDE SEQUENCE [LARGE SCALE MRNA] OF 1929-2788</scope>
    <source>
        <strain>C57BL/6J</strain>
        <tissue>Cerebellum</tissue>
    </source>
</reference>
<reference key="5">
    <citation type="journal article" date="2010" name="Cell">
        <title>A tissue-specific atlas of mouse protein phosphorylation and expression.</title>
        <authorList>
            <person name="Huttlin E.L."/>
            <person name="Jedrychowski M.P."/>
            <person name="Elias J.E."/>
            <person name="Goswami T."/>
            <person name="Rad R."/>
            <person name="Beausoleil S.A."/>
            <person name="Villen J."/>
            <person name="Haas W."/>
            <person name="Sowa M.E."/>
            <person name="Gygi S.P."/>
        </authorList>
    </citation>
    <scope>IDENTIFICATION BY MASS SPECTROMETRY [LARGE SCALE ANALYSIS]</scope>
    <source>
        <tissue>Pancreas</tissue>
        <tissue>Spleen</tissue>
        <tissue>Testis</tissue>
    </source>
</reference>
<comment type="function">
    <text evidence="1">Part of the small subunit (SSU) processome, first precursor of the small eukaryotic ribosomal subunit. During the assembly of the SSU processome in the nucleolus, many ribosome biogenesis factors, an RNA chaperone and ribosomal proteins associate with the nascent pre-rRNA and work in concert to generate RNA folding, modifications, rearrangements and cleavage as well as targeted degradation of pre-ribosomal RNA by the RNA exosome. Involved in 18S pre-rRNA processing. Associates with U3 snoRNA.</text>
</comment>
<comment type="subunit">
    <text evidence="1">Part of the small subunit (SSU) processome, composed of more than 70 proteins and the RNA chaperone small nucleolar RNA (snoRNA) U3. Interacts with FBL and PPP1R26.</text>
</comment>
<comment type="subcellular location">
    <subcellularLocation>
        <location evidence="1">Nucleus</location>
        <location evidence="1">Nucleolus</location>
    </subcellularLocation>
    <text evidence="1">Colocalizes with NCL in the nucleolus.</text>
</comment>
<comment type="similarity">
    <text evidence="4">Belongs to the UTP20 family.</text>
</comment>
<comment type="sequence caution" evidence="4">
    <conflict type="miscellaneous discrepancy">
        <sequence resource="EMBL-CDS" id="AAH84586"/>
    </conflict>
    <text>Contaminating sequence. Potential poly-A sequence.</text>
</comment>
<comment type="sequence caution" evidence="4">
    <conflict type="erroneous initiation">
        <sequence resource="EMBL-CDS" id="BAC53793"/>
    </conflict>
    <text>Truncated N-terminus.</text>
</comment>
<comment type="sequence caution" evidence="4">
    <conflict type="frameshift">
        <sequence resource="EMBL-CDS" id="BAC53793"/>
    </conflict>
</comment>
<proteinExistence type="evidence at protein level"/>
<gene>
    <name type="primary">Utp20</name>
    <name type="synonym">Drim</name>
</gene>
<name>UTP20_MOUSE</name>
<organism>
    <name type="scientific">Mus musculus</name>
    <name type="common">Mouse</name>
    <dbReference type="NCBI Taxonomy" id="10090"/>
    <lineage>
        <taxon>Eukaryota</taxon>
        <taxon>Metazoa</taxon>
        <taxon>Chordata</taxon>
        <taxon>Craniata</taxon>
        <taxon>Vertebrata</taxon>
        <taxon>Euteleostomi</taxon>
        <taxon>Mammalia</taxon>
        <taxon>Eutheria</taxon>
        <taxon>Euarchontoglires</taxon>
        <taxon>Glires</taxon>
        <taxon>Rodentia</taxon>
        <taxon>Myomorpha</taxon>
        <taxon>Muroidea</taxon>
        <taxon>Muridae</taxon>
        <taxon>Murinae</taxon>
        <taxon>Mus</taxon>
        <taxon>Mus</taxon>
    </lineage>
</organism>
<protein>
    <recommendedName>
        <fullName>Small subunit processome component 20 homolog</fullName>
    </recommendedName>
    <alternativeName>
        <fullName>Down-regulated in metastasis protein</fullName>
    </alternativeName>
</protein>
<dbReference type="EMBL" id="AC155820">
    <property type="status" value="NOT_ANNOTATED_CDS"/>
    <property type="molecule type" value="Genomic_DNA"/>
</dbReference>
<dbReference type="EMBL" id="AC164567">
    <property type="status" value="NOT_ANNOTATED_CDS"/>
    <property type="molecule type" value="Genomic_DNA"/>
</dbReference>
<dbReference type="EMBL" id="BC005522">
    <property type="protein sequence ID" value="AAH05522.1"/>
    <property type="molecule type" value="mRNA"/>
</dbReference>
<dbReference type="EMBL" id="BC048955">
    <property type="protein sequence ID" value="AAH48955.1"/>
    <property type="molecule type" value="mRNA"/>
</dbReference>
<dbReference type="EMBL" id="BC084586">
    <property type="protein sequence ID" value="AAH84586.1"/>
    <property type="status" value="ALT_SEQ"/>
    <property type="molecule type" value="mRNA"/>
</dbReference>
<dbReference type="EMBL" id="AB052760">
    <property type="protein sequence ID" value="BAC53793.1"/>
    <property type="status" value="ALT_SEQ"/>
    <property type="molecule type" value="mRNA"/>
</dbReference>
<dbReference type="EMBL" id="AK047081">
    <property type="protein sequence ID" value="BAC32954.2"/>
    <property type="molecule type" value="mRNA"/>
</dbReference>
<dbReference type="SMR" id="Q5XG71"/>
<dbReference type="FunCoup" id="Q5XG71">
    <property type="interactions" value="2203"/>
</dbReference>
<dbReference type="STRING" id="10090.ENSMUSP00000004470"/>
<dbReference type="GlyGen" id="Q5XG71">
    <property type="glycosylation" value="2 sites, 1 O-linked glycan (1 site)"/>
</dbReference>
<dbReference type="iPTMnet" id="Q5XG71"/>
<dbReference type="PhosphoSitePlus" id="Q5XG71"/>
<dbReference type="PaxDb" id="10090-ENSMUSP00000004470"/>
<dbReference type="PeptideAtlas" id="Q5XG71"/>
<dbReference type="ProteomicsDB" id="297973"/>
<dbReference type="Pumba" id="Q5XG71"/>
<dbReference type="AGR" id="MGI:1917933"/>
<dbReference type="MGI" id="MGI:1917933">
    <property type="gene designation" value="Utp20"/>
</dbReference>
<dbReference type="eggNOG" id="KOG1823">
    <property type="taxonomic scope" value="Eukaryota"/>
</dbReference>
<dbReference type="InParanoid" id="Q5XG71"/>
<dbReference type="PhylomeDB" id="Q5XG71"/>
<dbReference type="Reactome" id="R-MMU-6791226">
    <property type="pathway name" value="Major pathway of rRNA processing in the nucleolus and cytosol"/>
</dbReference>
<dbReference type="ChiTaRS" id="Utp20">
    <property type="organism name" value="mouse"/>
</dbReference>
<dbReference type="PRO" id="PR:Q5XG71"/>
<dbReference type="Proteomes" id="UP000000589">
    <property type="component" value="Unplaced"/>
</dbReference>
<dbReference type="RNAct" id="Q5XG71">
    <property type="molecule type" value="protein"/>
</dbReference>
<dbReference type="GO" id="GO:0005730">
    <property type="term" value="C:nucleolus"/>
    <property type="evidence" value="ECO:0000250"/>
    <property type="project" value="UniProtKB"/>
</dbReference>
<dbReference type="GO" id="GO:0032040">
    <property type="term" value="C:small-subunit processome"/>
    <property type="evidence" value="ECO:0000250"/>
    <property type="project" value="UniProtKB"/>
</dbReference>
<dbReference type="GO" id="GO:0042274">
    <property type="term" value="P:ribosomal small subunit biogenesis"/>
    <property type="evidence" value="ECO:0000250"/>
    <property type="project" value="UniProtKB"/>
</dbReference>
<dbReference type="GO" id="GO:0006364">
    <property type="term" value="P:rRNA processing"/>
    <property type="evidence" value="ECO:0000250"/>
    <property type="project" value="UniProtKB"/>
</dbReference>
<dbReference type="Gene3D" id="1.25.10.10">
    <property type="entry name" value="Leucine-rich Repeat Variant"/>
    <property type="match status" value="1"/>
</dbReference>
<dbReference type="InterPro" id="IPR011989">
    <property type="entry name" value="ARM-like"/>
</dbReference>
<dbReference type="InterPro" id="IPR016024">
    <property type="entry name" value="ARM-type_fold"/>
</dbReference>
<dbReference type="InterPro" id="IPR052575">
    <property type="entry name" value="SSU_processome_comp_20"/>
</dbReference>
<dbReference type="InterPro" id="IPR046523">
    <property type="entry name" value="UTP20_C"/>
</dbReference>
<dbReference type="InterPro" id="IPR011430">
    <property type="entry name" value="UTP20_N"/>
</dbReference>
<dbReference type="PANTHER" id="PTHR17695">
    <property type="entry name" value="SMALL SUBUNIT PROCESSOME COMPONENT 20 HOMOLOG"/>
    <property type="match status" value="1"/>
</dbReference>
<dbReference type="PANTHER" id="PTHR17695:SF11">
    <property type="entry name" value="SMALL SUBUNIT PROCESSOME COMPONENT 20 HOMOLOG"/>
    <property type="match status" value="1"/>
</dbReference>
<dbReference type="Pfam" id="PF20416">
    <property type="entry name" value="UTP20"/>
    <property type="match status" value="1"/>
</dbReference>
<dbReference type="Pfam" id="PF23099">
    <property type="entry name" value="UTP20_C"/>
    <property type="match status" value="1"/>
</dbReference>
<dbReference type="Pfam" id="PF07539">
    <property type="entry name" value="UTP20_N"/>
    <property type="match status" value="1"/>
</dbReference>
<dbReference type="SUPFAM" id="SSF48371">
    <property type="entry name" value="ARM repeat"/>
    <property type="match status" value="3"/>
</dbReference>
<accession>Q5XG71</accession>
<accession>Q80V22</accession>
<accession>Q8BXH9</accession>
<accession>Q8CHL6</accession>
<accession>Q99K11</accession>